<gene>
    <name evidence="4" type="primary">CRR6</name>
    <name evidence="6" type="ordered locus">At2g47910</name>
</gene>
<reference key="1">
    <citation type="journal article" date="1999" name="Nature">
        <title>Sequence and analysis of chromosome 2 of the plant Arabidopsis thaliana.</title>
        <authorList>
            <person name="Lin X."/>
            <person name="Kaul S."/>
            <person name="Rounsley S.D."/>
            <person name="Shea T.P."/>
            <person name="Benito M.-I."/>
            <person name="Town C.D."/>
            <person name="Fujii C.Y."/>
            <person name="Mason T.M."/>
            <person name="Bowman C.L."/>
            <person name="Barnstead M.E."/>
            <person name="Feldblyum T.V."/>
            <person name="Buell C.R."/>
            <person name="Ketchum K.A."/>
            <person name="Lee J.J."/>
            <person name="Ronning C.M."/>
            <person name="Koo H.L."/>
            <person name="Moffat K.S."/>
            <person name="Cronin L.A."/>
            <person name="Shen M."/>
            <person name="Pai G."/>
            <person name="Van Aken S."/>
            <person name="Umayam L."/>
            <person name="Tallon L.J."/>
            <person name="Gill J.E."/>
            <person name="Adams M.D."/>
            <person name="Carrera A.J."/>
            <person name="Creasy T.H."/>
            <person name="Goodman H.M."/>
            <person name="Somerville C.R."/>
            <person name="Copenhaver G.P."/>
            <person name="Preuss D."/>
            <person name="Nierman W.C."/>
            <person name="White O."/>
            <person name="Eisen J.A."/>
            <person name="Salzberg S.L."/>
            <person name="Fraser C.M."/>
            <person name="Venter J.C."/>
        </authorList>
    </citation>
    <scope>NUCLEOTIDE SEQUENCE [LARGE SCALE GENOMIC DNA]</scope>
    <source>
        <strain>cv. Columbia</strain>
    </source>
</reference>
<reference key="2">
    <citation type="journal article" date="2017" name="Plant J.">
        <title>Araport11: a complete reannotation of the Arabidopsis thaliana reference genome.</title>
        <authorList>
            <person name="Cheng C.Y."/>
            <person name="Krishnakumar V."/>
            <person name="Chan A.P."/>
            <person name="Thibaud-Nissen F."/>
            <person name="Schobel S."/>
            <person name="Town C.D."/>
        </authorList>
    </citation>
    <scope>GENOME REANNOTATION</scope>
    <source>
        <strain>cv. Columbia</strain>
    </source>
</reference>
<reference key="3">
    <citation type="journal article" date="2003" name="Science">
        <title>Empirical analysis of transcriptional activity in the Arabidopsis genome.</title>
        <authorList>
            <person name="Yamada K."/>
            <person name="Lim J."/>
            <person name="Dale J.M."/>
            <person name="Chen H."/>
            <person name="Shinn P."/>
            <person name="Palm C.J."/>
            <person name="Southwick A.M."/>
            <person name="Wu H.C."/>
            <person name="Kim C.J."/>
            <person name="Nguyen M."/>
            <person name="Pham P.K."/>
            <person name="Cheuk R.F."/>
            <person name="Karlin-Newmann G."/>
            <person name="Liu S.X."/>
            <person name="Lam B."/>
            <person name="Sakano H."/>
            <person name="Wu T."/>
            <person name="Yu G."/>
            <person name="Miranda M."/>
            <person name="Quach H.L."/>
            <person name="Tripp M."/>
            <person name="Chang C.H."/>
            <person name="Lee J.M."/>
            <person name="Toriumi M.J."/>
            <person name="Chan M.M."/>
            <person name="Tang C.C."/>
            <person name="Onodera C.S."/>
            <person name="Deng J.M."/>
            <person name="Akiyama K."/>
            <person name="Ansari Y."/>
            <person name="Arakawa T."/>
            <person name="Banh J."/>
            <person name="Banno F."/>
            <person name="Bowser L."/>
            <person name="Brooks S.Y."/>
            <person name="Carninci P."/>
            <person name="Chao Q."/>
            <person name="Choy N."/>
            <person name="Enju A."/>
            <person name="Goldsmith A.D."/>
            <person name="Gurjal M."/>
            <person name="Hansen N.F."/>
            <person name="Hayashizaki Y."/>
            <person name="Johnson-Hopson C."/>
            <person name="Hsuan V.W."/>
            <person name="Iida K."/>
            <person name="Karnes M."/>
            <person name="Khan S."/>
            <person name="Koesema E."/>
            <person name="Ishida J."/>
            <person name="Jiang P.X."/>
            <person name="Jones T."/>
            <person name="Kawai J."/>
            <person name="Kamiya A."/>
            <person name="Meyers C."/>
            <person name="Nakajima M."/>
            <person name="Narusaka M."/>
            <person name="Seki M."/>
            <person name="Sakurai T."/>
            <person name="Satou M."/>
            <person name="Tamse R."/>
            <person name="Vaysberg M."/>
            <person name="Wallender E.K."/>
            <person name="Wong C."/>
            <person name="Yamamura Y."/>
            <person name="Yuan S."/>
            <person name="Shinozaki K."/>
            <person name="Davis R.W."/>
            <person name="Theologis A."/>
            <person name="Ecker J.R."/>
        </authorList>
    </citation>
    <scope>NUCLEOTIDE SEQUENCE [LARGE SCALE MRNA]</scope>
    <source>
        <strain>cv. Columbia</strain>
    </source>
</reference>
<reference key="4">
    <citation type="journal article" date="2006" name="Plant Physiol.">
        <title>Chlororespiratory reduction 6 is a novel factor required for accumulation of the chloroplast NAD(P)H dehydrogenase complex in Arabidopsis.</title>
        <authorList>
            <person name="Munshi M.K."/>
            <person name="Kobayashi Y."/>
            <person name="Shikanai T."/>
        </authorList>
    </citation>
    <scope>FUNCTION</scope>
    <scope>SUBCELLULAR LOCATION</scope>
    <scope>DISRUPTION PHENOTYPE</scope>
</reference>
<reference key="5">
    <citation type="journal article" date="2010" name="Plant J.">
        <title>Chloroplast stromal proteins, CRR6 and CRR7, are required for assembly of the NAD(P)H dehydrogenase subcomplex A in Arabidopsis.</title>
        <authorList>
            <person name="Peng L."/>
            <person name="Cai W."/>
            <person name="Shikanai T."/>
        </authorList>
    </citation>
    <scope>FUNCTION</scope>
    <scope>SUBCELLULAR LOCATION</scope>
    <scope>DISRUPTION PHENOTYPE</scope>
</reference>
<name>CRR6_ARATH</name>
<organism>
    <name type="scientific">Arabidopsis thaliana</name>
    <name type="common">Mouse-ear cress</name>
    <dbReference type="NCBI Taxonomy" id="3702"/>
    <lineage>
        <taxon>Eukaryota</taxon>
        <taxon>Viridiplantae</taxon>
        <taxon>Streptophyta</taxon>
        <taxon>Embryophyta</taxon>
        <taxon>Tracheophyta</taxon>
        <taxon>Spermatophyta</taxon>
        <taxon>Magnoliopsida</taxon>
        <taxon>eudicotyledons</taxon>
        <taxon>Gunneridae</taxon>
        <taxon>Pentapetalae</taxon>
        <taxon>rosids</taxon>
        <taxon>malvids</taxon>
        <taxon>Brassicales</taxon>
        <taxon>Brassicaceae</taxon>
        <taxon>Camelineae</taxon>
        <taxon>Arabidopsis</taxon>
    </lineage>
</organism>
<feature type="transit peptide" description="Chloroplast" evidence="1">
    <location>
        <begin position="1"/>
        <end position="59"/>
    </location>
</feature>
<feature type="chain" id="PRO_0000433243" description="Protein CHLORORESPIRATORY REDUCTION 6, chloroplastic" evidence="1">
    <location>
        <begin position="60"/>
        <end position="246"/>
    </location>
</feature>
<sequence>MATKAVLLPWLIPSPRHVSLFPVVQLPALETAGWCVRKRRAEDVAVSVAFNPSGNFDISAFENDQDSDKVEPPMPPTTGRYEVVIDNDSIGRLDLSPFQRAIGITSPDDFGVAEPKRYLDRTIGFTINYKREDPGDPRELSEYPDVRLWFVRLDAMYPWLPLLLDWRAGELARYAAMLVPHQMSLRMGVVFNPEALELFVMNKVFVVYPWLKRHGVPKPRLKTSDMARMLGFGIGDELFDLIDHNE</sequence>
<dbReference type="EMBL" id="AC005309">
    <property type="protein sequence ID" value="AAC63645.1"/>
    <property type="molecule type" value="Genomic_DNA"/>
</dbReference>
<dbReference type="EMBL" id="AC006072">
    <property type="protein sequence ID" value="AAM15131.1"/>
    <property type="molecule type" value="Genomic_DNA"/>
</dbReference>
<dbReference type="EMBL" id="CP002685">
    <property type="protein sequence ID" value="AEC10910.1"/>
    <property type="molecule type" value="Genomic_DNA"/>
</dbReference>
<dbReference type="EMBL" id="AF324707">
    <property type="protein sequence ID" value="AAG40058.1"/>
    <property type="molecule type" value="mRNA"/>
</dbReference>
<dbReference type="EMBL" id="AF339704">
    <property type="protein sequence ID" value="AAK00386.1"/>
    <property type="molecule type" value="mRNA"/>
</dbReference>
<dbReference type="EMBL" id="AY045692">
    <property type="protein sequence ID" value="AAK74050.1"/>
    <property type="molecule type" value="mRNA"/>
</dbReference>
<dbReference type="EMBL" id="AY054146">
    <property type="protein sequence ID" value="AAL06807.1"/>
    <property type="molecule type" value="mRNA"/>
</dbReference>
<dbReference type="EMBL" id="AY084309">
    <property type="protein sequence ID" value="AAM60898.1"/>
    <property type="molecule type" value="mRNA"/>
</dbReference>
<dbReference type="PIR" id="A84921">
    <property type="entry name" value="A84921"/>
</dbReference>
<dbReference type="RefSeq" id="NP_566113.1">
    <molecule id="O82258-1"/>
    <property type="nucleotide sequence ID" value="NM_130358.4"/>
</dbReference>
<dbReference type="FunCoup" id="O82258">
    <property type="interactions" value="897"/>
</dbReference>
<dbReference type="STRING" id="3702.O82258"/>
<dbReference type="iPTMnet" id="O82258"/>
<dbReference type="PaxDb" id="3702-AT2G47910.1"/>
<dbReference type="ProteomicsDB" id="222645">
    <molecule id="O82258-1"/>
</dbReference>
<dbReference type="EnsemblPlants" id="AT2G47910.1">
    <molecule id="O82258-1"/>
    <property type="protein sequence ID" value="AT2G47910.1"/>
    <property type="gene ID" value="AT2G47910"/>
</dbReference>
<dbReference type="GeneID" id="819403"/>
<dbReference type="Gramene" id="AT2G47910.1">
    <molecule id="O82258-1"/>
    <property type="protein sequence ID" value="AT2G47910.1"/>
    <property type="gene ID" value="AT2G47910"/>
</dbReference>
<dbReference type="KEGG" id="ath:AT2G47910"/>
<dbReference type="Araport" id="AT2G47910"/>
<dbReference type="TAIR" id="AT2G47910">
    <property type="gene designation" value="CRR6"/>
</dbReference>
<dbReference type="eggNOG" id="ENOG502QTFV">
    <property type="taxonomic scope" value="Eukaryota"/>
</dbReference>
<dbReference type="HOGENOM" id="CLU_092224_0_0_1"/>
<dbReference type="InParanoid" id="O82258"/>
<dbReference type="OrthoDB" id="1903669at2759"/>
<dbReference type="PhylomeDB" id="O82258"/>
<dbReference type="PRO" id="PR:O82258"/>
<dbReference type="Proteomes" id="UP000006548">
    <property type="component" value="Chromosome 2"/>
</dbReference>
<dbReference type="ExpressionAtlas" id="O82258">
    <property type="expression patterns" value="baseline and differential"/>
</dbReference>
<dbReference type="GO" id="GO:0009507">
    <property type="term" value="C:chloroplast"/>
    <property type="evidence" value="ECO:0007005"/>
    <property type="project" value="TAIR"/>
</dbReference>
<dbReference type="GO" id="GO:0009570">
    <property type="term" value="C:chloroplast stroma"/>
    <property type="evidence" value="ECO:0000314"/>
    <property type="project" value="TAIR"/>
</dbReference>
<dbReference type="GO" id="GO:0009535">
    <property type="term" value="C:chloroplast thylakoid membrane"/>
    <property type="evidence" value="ECO:0000314"/>
    <property type="project" value="TAIR"/>
</dbReference>
<dbReference type="GO" id="GO:0005829">
    <property type="term" value="C:cytosol"/>
    <property type="evidence" value="ECO:0007005"/>
    <property type="project" value="TAIR"/>
</dbReference>
<dbReference type="GO" id="GO:0010275">
    <property type="term" value="P:NAD(P)H dehydrogenase complex assembly"/>
    <property type="evidence" value="ECO:0000315"/>
    <property type="project" value="TAIR"/>
</dbReference>
<dbReference type="InterPro" id="IPR014946">
    <property type="entry name" value="CRR6"/>
</dbReference>
<dbReference type="NCBIfam" id="NF038024">
    <property type="entry name" value="CRR6_slr1097"/>
    <property type="match status" value="1"/>
</dbReference>
<dbReference type="PANTHER" id="PTHR35724">
    <property type="entry name" value="PROTEIN CHLORORESPIRATORY REDUCTION 6, CHLOROPLASTIC"/>
    <property type="match status" value="1"/>
</dbReference>
<dbReference type="PANTHER" id="PTHR35724:SF1">
    <property type="entry name" value="PROTEIN CHLORORESPIRATORY REDUCTION 6, CHLOROPLASTIC"/>
    <property type="match status" value="1"/>
</dbReference>
<dbReference type="Pfam" id="PF08847">
    <property type="entry name" value="Crr6"/>
    <property type="match status" value="1"/>
</dbReference>
<proteinExistence type="evidence at transcript level"/>
<comment type="function">
    <text evidence="2 3">Required for both formation and activity of the chloroplast NAD(P)H dehydrogenase (NDH) complex of the photosynthetic electron transport chain. May function in assembly or stabilization of the NDH complex (PubMed:16648216, PubMed:20444231). Required for the accumulation of NDH subcomplex A, which is a core part of NDH. May be involved in post-translational steps during the biogenesis of subcomplex A (PubMed:20444231).</text>
</comment>
<comment type="subcellular location">
    <subcellularLocation>
        <location evidence="3">Plastid</location>
        <location evidence="3">Chloroplast stroma</location>
    </subcellularLocation>
    <text evidence="2">Previously localized in chloroplast thylakoid membrane fraction.</text>
</comment>
<comment type="alternative products">
    <event type="alternative splicing"/>
    <isoform>
        <id>O82258-1</id>
        <name>1</name>
        <sequence type="displayed"/>
    </isoform>
    <text evidence="5">A number of isoforms are produced. According to EST sequences.</text>
</comment>
<comment type="disruption phenotype">
    <text evidence="2 3">Impaired chloroplastic NAD(P)H dehydrogenase (NDH) activity, probably due to a reduced stability of the NDH complex.</text>
</comment>
<keyword id="KW-0025">Alternative splicing</keyword>
<keyword id="KW-0143">Chaperone</keyword>
<keyword id="KW-0150">Chloroplast</keyword>
<keyword id="KW-0934">Plastid</keyword>
<keyword id="KW-1185">Reference proteome</keyword>
<keyword id="KW-0809">Transit peptide</keyword>
<protein>
    <recommendedName>
        <fullName evidence="5">Protein CHLORORESPIRATORY REDUCTION 6, chloroplastic</fullName>
    </recommendedName>
</protein>
<evidence type="ECO:0000255" key="1"/>
<evidence type="ECO:0000269" key="2">
    <source>
    </source>
</evidence>
<evidence type="ECO:0000269" key="3">
    <source>
    </source>
</evidence>
<evidence type="ECO:0000303" key="4">
    <source>
    </source>
</evidence>
<evidence type="ECO:0000305" key="5"/>
<evidence type="ECO:0000312" key="6">
    <source>
        <dbReference type="Araport" id="AT2G47910"/>
    </source>
</evidence>
<accession>O82258</accession>